<gene>
    <name type="primary">Ctxn3</name>
</gene>
<accession>Q8BXZ0</accession>
<feature type="chain" id="PRO_0000284514" description="Cortexin-3">
    <location>
        <begin position="1"/>
        <end position="80"/>
    </location>
</feature>
<feature type="transmembrane region" description="Helical" evidence="1">
    <location>
        <begin position="28"/>
        <end position="48"/>
    </location>
</feature>
<comment type="subcellular location">
    <subcellularLocation>
        <location evidence="2">Membrane</location>
        <topology evidence="2">Single-pass membrane protein</topology>
    </subcellularLocation>
</comment>
<comment type="similarity">
    <text evidence="2">Belongs to the cortexin family.</text>
</comment>
<reference key="1">
    <citation type="journal article" date="2005" name="Science">
        <title>The transcriptional landscape of the mammalian genome.</title>
        <authorList>
            <person name="Carninci P."/>
            <person name="Kasukawa T."/>
            <person name="Katayama S."/>
            <person name="Gough J."/>
            <person name="Frith M.C."/>
            <person name="Maeda N."/>
            <person name="Oyama R."/>
            <person name="Ravasi T."/>
            <person name="Lenhard B."/>
            <person name="Wells C."/>
            <person name="Kodzius R."/>
            <person name="Shimokawa K."/>
            <person name="Bajic V.B."/>
            <person name="Brenner S.E."/>
            <person name="Batalov S."/>
            <person name="Forrest A.R."/>
            <person name="Zavolan M."/>
            <person name="Davis M.J."/>
            <person name="Wilming L.G."/>
            <person name="Aidinis V."/>
            <person name="Allen J.E."/>
            <person name="Ambesi-Impiombato A."/>
            <person name="Apweiler R."/>
            <person name="Aturaliya R.N."/>
            <person name="Bailey T.L."/>
            <person name="Bansal M."/>
            <person name="Baxter L."/>
            <person name="Beisel K.W."/>
            <person name="Bersano T."/>
            <person name="Bono H."/>
            <person name="Chalk A.M."/>
            <person name="Chiu K.P."/>
            <person name="Choudhary V."/>
            <person name="Christoffels A."/>
            <person name="Clutterbuck D.R."/>
            <person name="Crowe M.L."/>
            <person name="Dalla E."/>
            <person name="Dalrymple B.P."/>
            <person name="de Bono B."/>
            <person name="Della Gatta G."/>
            <person name="di Bernardo D."/>
            <person name="Down T."/>
            <person name="Engstrom P."/>
            <person name="Fagiolini M."/>
            <person name="Faulkner G."/>
            <person name="Fletcher C.F."/>
            <person name="Fukushima T."/>
            <person name="Furuno M."/>
            <person name="Futaki S."/>
            <person name="Gariboldi M."/>
            <person name="Georgii-Hemming P."/>
            <person name="Gingeras T.R."/>
            <person name="Gojobori T."/>
            <person name="Green R.E."/>
            <person name="Gustincich S."/>
            <person name="Harbers M."/>
            <person name="Hayashi Y."/>
            <person name="Hensch T.K."/>
            <person name="Hirokawa N."/>
            <person name="Hill D."/>
            <person name="Huminiecki L."/>
            <person name="Iacono M."/>
            <person name="Ikeo K."/>
            <person name="Iwama A."/>
            <person name="Ishikawa T."/>
            <person name="Jakt M."/>
            <person name="Kanapin A."/>
            <person name="Katoh M."/>
            <person name="Kawasawa Y."/>
            <person name="Kelso J."/>
            <person name="Kitamura H."/>
            <person name="Kitano H."/>
            <person name="Kollias G."/>
            <person name="Krishnan S.P."/>
            <person name="Kruger A."/>
            <person name="Kummerfeld S.K."/>
            <person name="Kurochkin I.V."/>
            <person name="Lareau L.F."/>
            <person name="Lazarevic D."/>
            <person name="Lipovich L."/>
            <person name="Liu J."/>
            <person name="Liuni S."/>
            <person name="McWilliam S."/>
            <person name="Madan Babu M."/>
            <person name="Madera M."/>
            <person name="Marchionni L."/>
            <person name="Matsuda H."/>
            <person name="Matsuzawa S."/>
            <person name="Miki H."/>
            <person name="Mignone F."/>
            <person name="Miyake S."/>
            <person name="Morris K."/>
            <person name="Mottagui-Tabar S."/>
            <person name="Mulder N."/>
            <person name="Nakano N."/>
            <person name="Nakauchi H."/>
            <person name="Ng P."/>
            <person name="Nilsson R."/>
            <person name="Nishiguchi S."/>
            <person name="Nishikawa S."/>
            <person name="Nori F."/>
            <person name="Ohara O."/>
            <person name="Okazaki Y."/>
            <person name="Orlando V."/>
            <person name="Pang K.C."/>
            <person name="Pavan W.J."/>
            <person name="Pavesi G."/>
            <person name="Pesole G."/>
            <person name="Petrovsky N."/>
            <person name="Piazza S."/>
            <person name="Reed J."/>
            <person name="Reid J.F."/>
            <person name="Ring B.Z."/>
            <person name="Ringwald M."/>
            <person name="Rost B."/>
            <person name="Ruan Y."/>
            <person name="Salzberg S.L."/>
            <person name="Sandelin A."/>
            <person name="Schneider C."/>
            <person name="Schoenbach C."/>
            <person name="Sekiguchi K."/>
            <person name="Semple C.A."/>
            <person name="Seno S."/>
            <person name="Sessa L."/>
            <person name="Sheng Y."/>
            <person name="Shibata Y."/>
            <person name="Shimada H."/>
            <person name="Shimada K."/>
            <person name="Silva D."/>
            <person name="Sinclair B."/>
            <person name="Sperling S."/>
            <person name="Stupka E."/>
            <person name="Sugiura K."/>
            <person name="Sultana R."/>
            <person name="Takenaka Y."/>
            <person name="Taki K."/>
            <person name="Tammoja K."/>
            <person name="Tan S.L."/>
            <person name="Tang S."/>
            <person name="Taylor M.S."/>
            <person name="Tegner J."/>
            <person name="Teichmann S.A."/>
            <person name="Ueda H.R."/>
            <person name="van Nimwegen E."/>
            <person name="Verardo R."/>
            <person name="Wei C.L."/>
            <person name="Yagi K."/>
            <person name="Yamanishi H."/>
            <person name="Zabarovsky E."/>
            <person name="Zhu S."/>
            <person name="Zimmer A."/>
            <person name="Hide W."/>
            <person name="Bult C."/>
            <person name="Grimmond S.M."/>
            <person name="Teasdale R.D."/>
            <person name="Liu E.T."/>
            <person name="Brusic V."/>
            <person name="Quackenbush J."/>
            <person name="Wahlestedt C."/>
            <person name="Mattick J.S."/>
            <person name="Hume D.A."/>
            <person name="Kai C."/>
            <person name="Sasaki D."/>
            <person name="Tomaru Y."/>
            <person name="Fukuda S."/>
            <person name="Kanamori-Katayama M."/>
            <person name="Suzuki M."/>
            <person name="Aoki J."/>
            <person name="Arakawa T."/>
            <person name="Iida J."/>
            <person name="Imamura K."/>
            <person name="Itoh M."/>
            <person name="Kato T."/>
            <person name="Kawaji H."/>
            <person name="Kawagashira N."/>
            <person name="Kawashima T."/>
            <person name="Kojima M."/>
            <person name="Kondo S."/>
            <person name="Konno H."/>
            <person name="Nakano K."/>
            <person name="Ninomiya N."/>
            <person name="Nishio T."/>
            <person name="Okada M."/>
            <person name="Plessy C."/>
            <person name="Shibata K."/>
            <person name="Shiraki T."/>
            <person name="Suzuki S."/>
            <person name="Tagami M."/>
            <person name="Waki K."/>
            <person name="Watahiki A."/>
            <person name="Okamura-Oho Y."/>
            <person name="Suzuki H."/>
            <person name="Kawai J."/>
            <person name="Hayashizaki Y."/>
        </authorList>
    </citation>
    <scope>NUCLEOTIDE SEQUENCE [LARGE SCALE MRNA]</scope>
    <source>
        <strain>C57BL/6J</strain>
        <tissue>Cerebellum</tissue>
    </source>
</reference>
<keyword id="KW-0472">Membrane</keyword>
<keyword id="KW-1185">Reference proteome</keyword>
<keyword id="KW-0812">Transmembrane</keyword>
<keyword id="KW-1133">Transmembrane helix</keyword>
<name>CTXN3_MOUSE</name>
<sequence>MDGGQPVPSPLVPLGNGSDYSMSLEQKTTFVFVILLFIFLGILIVRCFRILLDPYRSMPTSTWADGLEGLEKGQFDHALA</sequence>
<organism>
    <name type="scientific">Mus musculus</name>
    <name type="common">Mouse</name>
    <dbReference type="NCBI Taxonomy" id="10090"/>
    <lineage>
        <taxon>Eukaryota</taxon>
        <taxon>Metazoa</taxon>
        <taxon>Chordata</taxon>
        <taxon>Craniata</taxon>
        <taxon>Vertebrata</taxon>
        <taxon>Euteleostomi</taxon>
        <taxon>Mammalia</taxon>
        <taxon>Eutheria</taxon>
        <taxon>Euarchontoglires</taxon>
        <taxon>Glires</taxon>
        <taxon>Rodentia</taxon>
        <taxon>Myomorpha</taxon>
        <taxon>Muroidea</taxon>
        <taxon>Muridae</taxon>
        <taxon>Murinae</taxon>
        <taxon>Mus</taxon>
        <taxon>Mus</taxon>
    </lineage>
</organism>
<evidence type="ECO:0000255" key="1"/>
<evidence type="ECO:0000305" key="2"/>
<protein>
    <recommendedName>
        <fullName>Cortexin-3</fullName>
    </recommendedName>
</protein>
<dbReference type="EMBL" id="AK042789">
    <property type="protein sequence ID" value="BAC31367.1"/>
    <property type="molecule type" value="mRNA"/>
</dbReference>
<dbReference type="CCDS" id="CCDS50294.1"/>
<dbReference type="RefSeq" id="NP_001128169.1">
    <property type="nucleotide sequence ID" value="NM_001134697.1"/>
</dbReference>
<dbReference type="RefSeq" id="XP_006526201.1">
    <property type="nucleotide sequence ID" value="XM_006526138.2"/>
</dbReference>
<dbReference type="RefSeq" id="XP_006526202.1">
    <property type="nucleotide sequence ID" value="XM_006526139.3"/>
</dbReference>
<dbReference type="RefSeq" id="XP_006526203.1">
    <property type="nucleotide sequence ID" value="XM_006526140.3"/>
</dbReference>
<dbReference type="RefSeq" id="XP_011245283.1">
    <property type="nucleotide sequence ID" value="XM_011246981.2"/>
</dbReference>
<dbReference type="SMR" id="Q8BXZ0"/>
<dbReference type="FunCoup" id="Q8BXZ0">
    <property type="interactions" value="35"/>
</dbReference>
<dbReference type="STRING" id="10090.ENSMUSP00000089507"/>
<dbReference type="PhosphoSitePlus" id="Q8BXZ0"/>
<dbReference type="PaxDb" id="10090-ENSMUSP00000089507"/>
<dbReference type="ProteomicsDB" id="279297"/>
<dbReference type="Ensembl" id="ENSMUST00000091892.4">
    <property type="protein sequence ID" value="ENSMUSP00000089507.3"/>
    <property type="gene ID" value="ENSMUSG00000069372.4"/>
</dbReference>
<dbReference type="Ensembl" id="ENSMUST00000209786.2">
    <property type="protein sequence ID" value="ENSMUSP00000147982.2"/>
    <property type="gene ID" value="ENSMUSG00000069372.4"/>
</dbReference>
<dbReference type="GeneID" id="629147"/>
<dbReference type="KEGG" id="mmu:629147"/>
<dbReference type="UCSC" id="uc008ezd.2">
    <property type="organism name" value="mouse"/>
</dbReference>
<dbReference type="AGR" id="MGI:3642816"/>
<dbReference type="CTD" id="613212"/>
<dbReference type="MGI" id="MGI:3642816">
    <property type="gene designation" value="Ctxn3"/>
</dbReference>
<dbReference type="VEuPathDB" id="HostDB:ENSMUSG00000069372"/>
<dbReference type="eggNOG" id="ENOG502S3V3">
    <property type="taxonomic scope" value="Eukaryota"/>
</dbReference>
<dbReference type="GeneTree" id="ENSGT00940000154412"/>
<dbReference type="HOGENOM" id="CLU_193122_0_0_1"/>
<dbReference type="InParanoid" id="Q8BXZ0"/>
<dbReference type="OMA" id="FSWLMEA"/>
<dbReference type="OrthoDB" id="9947540at2759"/>
<dbReference type="PhylomeDB" id="Q8BXZ0"/>
<dbReference type="TreeFam" id="TF333403"/>
<dbReference type="BioGRID-ORCS" id="629147">
    <property type="hits" value="3 hits in 74 CRISPR screens"/>
</dbReference>
<dbReference type="PRO" id="PR:Q8BXZ0"/>
<dbReference type="Proteomes" id="UP000000589">
    <property type="component" value="Chromosome 18"/>
</dbReference>
<dbReference type="RNAct" id="Q8BXZ0">
    <property type="molecule type" value="protein"/>
</dbReference>
<dbReference type="Bgee" id="ENSMUSG00000069372">
    <property type="expression patterns" value="Expressed in olfactory epithelium and 128 other cell types or tissues"/>
</dbReference>
<dbReference type="ExpressionAtlas" id="Q8BXZ0">
    <property type="expression patterns" value="baseline and differential"/>
</dbReference>
<dbReference type="GO" id="GO:0016020">
    <property type="term" value="C:membrane"/>
    <property type="evidence" value="ECO:0007669"/>
    <property type="project" value="UniProtKB-SubCell"/>
</dbReference>
<dbReference type="InterPro" id="IPR020066">
    <property type="entry name" value="Cortexin"/>
</dbReference>
<dbReference type="PANTHER" id="PTHR16736">
    <property type="entry name" value="CORTEXIN-1-RELATED"/>
    <property type="match status" value="1"/>
</dbReference>
<dbReference type="PANTHER" id="PTHR16736:SF1">
    <property type="entry name" value="CORTEXIN-3"/>
    <property type="match status" value="1"/>
</dbReference>
<dbReference type="Pfam" id="PF11057">
    <property type="entry name" value="Cortexin"/>
    <property type="match status" value="1"/>
</dbReference>
<proteinExistence type="inferred from homology"/>